<dbReference type="EC" id="6.3.1.1" evidence="1"/>
<dbReference type="EMBL" id="CP000227">
    <property type="protein sequence ID" value="ACM12246.1"/>
    <property type="molecule type" value="Genomic_DNA"/>
</dbReference>
<dbReference type="SMR" id="B9IX36"/>
<dbReference type="KEGG" id="bcq:BCQ_1818"/>
<dbReference type="HOGENOM" id="CLU_071543_0_0_9"/>
<dbReference type="UniPathway" id="UPA00134">
    <property type="reaction ID" value="UER00194"/>
</dbReference>
<dbReference type="Proteomes" id="UP000000441">
    <property type="component" value="Chromosome"/>
</dbReference>
<dbReference type="GO" id="GO:0005829">
    <property type="term" value="C:cytosol"/>
    <property type="evidence" value="ECO:0007669"/>
    <property type="project" value="TreeGrafter"/>
</dbReference>
<dbReference type="GO" id="GO:0004071">
    <property type="term" value="F:aspartate-ammonia ligase activity"/>
    <property type="evidence" value="ECO:0007669"/>
    <property type="project" value="UniProtKB-UniRule"/>
</dbReference>
<dbReference type="GO" id="GO:0005524">
    <property type="term" value="F:ATP binding"/>
    <property type="evidence" value="ECO:0007669"/>
    <property type="project" value="UniProtKB-UniRule"/>
</dbReference>
<dbReference type="GO" id="GO:0140096">
    <property type="term" value="F:catalytic activity, acting on a protein"/>
    <property type="evidence" value="ECO:0007669"/>
    <property type="project" value="UniProtKB-ARBA"/>
</dbReference>
<dbReference type="GO" id="GO:0016740">
    <property type="term" value="F:transferase activity"/>
    <property type="evidence" value="ECO:0007669"/>
    <property type="project" value="UniProtKB-ARBA"/>
</dbReference>
<dbReference type="GO" id="GO:0070981">
    <property type="term" value="P:L-asparagine biosynthetic process"/>
    <property type="evidence" value="ECO:0007669"/>
    <property type="project" value="UniProtKB-UniRule"/>
</dbReference>
<dbReference type="CDD" id="cd00645">
    <property type="entry name" value="AsnA"/>
    <property type="match status" value="1"/>
</dbReference>
<dbReference type="Gene3D" id="3.30.930.10">
    <property type="entry name" value="Bira Bifunctional Protein, Domain 2"/>
    <property type="match status" value="1"/>
</dbReference>
<dbReference type="HAMAP" id="MF_00555">
    <property type="entry name" value="AsnA"/>
    <property type="match status" value="1"/>
</dbReference>
<dbReference type="InterPro" id="IPR006195">
    <property type="entry name" value="aa-tRNA-synth_II"/>
</dbReference>
<dbReference type="InterPro" id="IPR045864">
    <property type="entry name" value="aa-tRNA-synth_II/BPL/LPL"/>
</dbReference>
<dbReference type="InterPro" id="IPR004618">
    <property type="entry name" value="AsnA"/>
</dbReference>
<dbReference type="NCBIfam" id="TIGR00669">
    <property type="entry name" value="asnA"/>
    <property type="match status" value="1"/>
</dbReference>
<dbReference type="PANTHER" id="PTHR30073">
    <property type="entry name" value="ASPARTATE--AMMONIA LIGASE"/>
    <property type="match status" value="1"/>
</dbReference>
<dbReference type="PANTHER" id="PTHR30073:SF5">
    <property type="entry name" value="ASPARTATE--AMMONIA LIGASE"/>
    <property type="match status" value="1"/>
</dbReference>
<dbReference type="Pfam" id="PF03590">
    <property type="entry name" value="AsnA"/>
    <property type="match status" value="1"/>
</dbReference>
<dbReference type="PIRSF" id="PIRSF001555">
    <property type="entry name" value="Asp_ammon_ligase"/>
    <property type="match status" value="1"/>
</dbReference>
<dbReference type="SUPFAM" id="SSF55681">
    <property type="entry name" value="Class II aaRS and biotin synthetases"/>
    <property type="match status" value="1"/>
</dbReference>
<dbReference type="PROSITE" id="PS50862">
    <property type="entry name" value="AA_TRNA_LIGASE_II"/>
    <property type="match status" value="1"/>
</dbReference>
<proteinExistence type="inferred from homology"/>
<protein>
    <recommendedName>
        <fullName evidence="1">Aspartate--ammonia ligase</fullName>
        <ecNumber evidence="1">6.3.1.1</ecNumber>
    </recommendedName>
    <alternativeName>
        <fullName evidence="1">Asparagine synthetase A</fullName>
    </alternativeName>
</protein>
<keyword id="KW-0028">Amino-acid biosynthesis</keyword>
<keyword id="KW-0061">Asparagine biosynthesis</keyword>
<keyword id="KW-0067">ATP-binding</keyword>
<keyword id="KW-0963">Cytoplasm</keyword>
<keyword id="KW-0436">Ligase</keyword>
<keyword id="KW-0547">Nucleotide-binding</keyword>
<comment type="catalytic activity">
    <reaction evidence="1">
        <text>L-aspartate + NH4(+) + ATP = L-asparagine + AMP + diphosphate + H(+)</text>
        <dbReference type="Rhea" id="RHEA:11372"/>
        <dbReference type="ChEBI" id="CHEBI:15378"/>
        <dbReference type="ChEBI" id="CHEBI:28938"/>
        <dbReference type="ChEBI" id="CHEBI:29991"/>
        <dbReference type="ChEBI" id="CHEBI:30616"/>
        <dbReference type="ChEBI" id="CHEBI:33019"/>
        <dbReference type="ChEBI" id="CHEBI:58048"/>
        <dbReference type="ChEBI" id="CHEBI:456215"/>
        <dbReference type="EC" id="6.3.1.1"/>
    </reaction>
</comment>
<comment type="pathway">
    <text evidence="1">Amino-acid biosynthesis; L-asparagine biosynthesis; L-asparagine from L-aspartate (ammonia route): step 1/1.</text>
</comment>
<comment type="subcellular location">
    <subcellularLocation>
        <location evidence="1">Cytoplasm</location>
    </subcellularLocation>
</comment>
<comment type="similarity">
    <text evidence="1">Belongs to the class-II aminoacyl-tRNA synthetase family. AsnA subfamily.</text>
</comment>
<name>ASNA_BACCQ</name>
<accession>B9IX36</accession>
<evidence type="ECO:0000255" key="1">
    <source>
        <dbReference type="HAMAP-Rule" id="MF_00555"/>
    </source>
</evidence>
<organism>
    <name type="scientific">Bacillus cereus (strain Q1)</name>
    <dbReference type="NCBI Taxonomy" id="361100"/>
    <lineage>
        <taxon>Bacteria</taxon>
        <taxon>Bacillati</taxon>
        <taxon>Bacillota</taxon>
        <taxon>Bacilli</taxon>
        <taxon>Bacillales</taxon>
        <taxon>Bacillaceae</taxon>
        <taxon>Bacillus</taxon>
        <taxon>Bacillus cereus group</taxon>
    </lineage>
</organism>
<sequence length="327" mass="38103">MYQSLMTVRETQIAIKEVKTFFEDQLAKRLELFRVSAPLFVTKKSGLNDHLNGVERPIEFDMLHSGEELEIVHSLAKWKRFALHEYGYEAGEGLYTNMNAIRRDEELDATHSIYVDQWDWEKIVQKEWRTVDYLQKTVLTIYGIFKDLEDHLFEKYPFLGKYLPEEIVFVTSQELEDKYPELTPKDREHAIAKEHGAVFIIGIGDALRSGEKHDGRAADYDDWKLNGDILFWHPVLQSSFELSSMGIRVDSKSLDEQLTKTGEDYKREYDFHKGILEDVLPLTIGGGIGQSRMCMYFLRKAHIGEVQSSVWPDDLREACKKENIHLF</sequence>
<reference key="1">
    <citation type="journal article" date="2009" name="J. Bacteriol.">
        <title>Complete genome sequence of the extremophilic Bacillus cereus strain Q1 with industrial applications.</title>
        <authorList>
            <person name="Xiong Z."/>
            <person name="Jiang Y."/>
            <person name="Qi D."/>
            <person name="Lu H."/>
            <person name="Yang F."/>
            <person name="Yang J."/>
            <person name="Chen L."/>
            <person name="Sun L."/>
            <person name="Xu X."/>
            <person name="Xue Y."/>
            <person name="Zhu Y."/>
            <person name="Jin Q."/>
        </authorList>
    </citation>
    <scope>NUCLEOTIDE SEQUENCE [LARGE SCALE GENOMIC DNA]</scope>
    <source>
        <strain>Q1</strain>
    </source>
</reference>
<gene>
    <name evidence="1" type="primary">asnA</name>
    <name type="ordered locus">BCQ_1818</name>
</gene>
<feature type="chain" id="PRO_1000146690" description="Aspartate--ammonia ligase">
    <location>
        <begin position="1"/>
        <end position="327"/>
    </location>
</feature>